<name>HRCA_SORC5</name>
<reference key="1">
    <citation type="journal article" date="2007" name="Nat. Biotechnol.">
        <title>Complete genome sequence of the myxobacterium Sorangium cellulosum.</title>
        <authorList>
            <person name="Schneiker S."/>
            <person name="Perlova O."/>
            <person name="Kaiser O."/>
            <person name="Gerth K."/>
            <person name="Alici A."/>
            <person name="Altmeyer M.O."/>
            <person name="Bartels D."/>
            <person name="Bekel T."/>
            <person name="Beyer S."/>
            <person name="Bode E."/>
            <person name="Bode H.B."/>
            <person name="Bolten C.J."/>
            <person name="Choudhuri J.V."/>
            <person name="Doss S."/>
            <person name="Elnakady Y.A."/>
            <person name="Frank B."/>
            <person name="Gaigalat L."/>
            <person name="Goesmann A."/>
            <person name="Groeger C."/>
            <person name="Gross F."/>
            <person name="Jelsbak L."/>
            <person name="Jelsbak L."/>
            <person name="Kalinowski J."/>
            <person name="Kegler C."/>
            <person name="Knauber T."/>
            <person name="Konietzny S."/>
            <person name="Kopp M."/>
            <person name="Krause L."/>
            <person name="Krug D."/>
            <person name="Linke B."/>
            <person name="Mahmud T."/>
            <person name="Martinez-Arias R."/>
            <person name="McHardy A.C."/>
            <person name="Merai M."/>
            <person name="Meyer F."/>
            <person name="Mormann S."/>
            <person name="Munoz-Dorado J."/>
            <person name="Perez J."/>
            <person name="Pradella S."/>
            <person name="Rachid S."/>
            <person name="Raddatz G."/>
            <person name="Rosenau F."/>
            <person name="Rueckert C."/>
            <person name="Sasse F."/>
            <person name="Scharfe M."/>
            <person name="Schuster S.C."/>
            <person name="Suen G."/>
            <person name="Treuner-Lange A."/>
            <person name="Velicer G.J."/>
            <person name="Vorholter F.-J."/>
            <person name="Weissman K.J."/>
            <person name="Welch R.D."/>
            <person name="Wenzel S.C."/>
            <person name="Whitworth D.E."/>
            <person name="Wilhelm S."/>
            <person name="Wittmann C."/>
            <person name="Bloecker H."/>
            <person name="Puehler A."/>
            <person name="Mueller R."/>
        </authorList>
    </citation>
    <scope>NUCLEOTIDE SEQUENCE [LARGE SCALE GENOMIC DNA]</scope>
    <source>
        <strain>So ce56</strain>
    </source>
</reference>
<evidence type="ECO:0000255" key="1">
    <source>
        <dbReference type="HAMAP-Rule" id="MF_00081"/>
    </source>
</evidence>
<feature type="chain" id="PRO_1000075293" description="Heat-inducible transcription repressor HrcA">
    <location>
        <begin position="1"/>
        <end position="347"/>
    </location>
</feature>
<proteinExistence type="inferred from homology"/>
<accession>A9GHW2</accession>
<gene>
    <name evidence="1" type="primary">hrcA</name>
    <name type="ordered locus">sce0010</name>
</gene>
<comment type="function">
    <text evidence="1">Negative regulator of class I heat shock genes (grpE-dnaK-dnaJ and groELS operons). Prevents heat-shock induction of these operons.</text>
</comment>
<comment type="similarity">
    <text evidence="1">Belongs to the HrcA family.</text>
</comment>
<protein>
    <recommendedName>
        <fullName evidence="1">Heat-inducible transcription repressor HrcA</fullName>
    </recommendedName>
</protein>
<sequence>MGDLSNRARKILFAAVTEFIATGDPVGSRTLARKYGLDLSAASIRNVLADLEEAGYLHQPHTSAGRIPTDRALRLFIDALVELRSLSPEQQAELSARFTEIYAGANDPLRETGRYLSELSGAAAVVAAPRAELRALAQLRFIPTKPGQLLAVLVFADGSVANRFISVDEAINEGELTRIHNLLTDVIEGRTLGEIRDLFARRLADERLQIDALRRRAFELGSKATADVTPRSEVVIEGQNRLIDLPEYADVDRLKKLMKALEEREELVDLLDRTLAAGAGEVTVFVGSEAGDLGGGQLSLVAAPYMENGRVAGTVGVLGPTRMDYAKVMPLVDATAAAMTEVRGKVK</sequence>
<dbReference type="EMBL" id="AM746676">
    <property type="protein sequence ID" value="CAN90166.1"/>
    <property type="molecule type" value="Genomic_DNA"/>
</dbReference>
<dbReference type="RefSeq" id="WP_012232644.1">
    <property type="nucleotide sequence ID" value="NC_010162.1"/>
</dbReference>
<dbReference type="SMR" id="A9GHW2"/>
<dbReference type="STRING" id="448385.sce0010"/>
<dbReference type="KEGG" id="scl:sce0010"/>
<dbReference type="eggNOG" id="COG1420">
    <property type="taxonomic scope" value="Bacteria"/>
</dbReference>
<dbReference type="HOGENOM" id="CLU_050019_0_0_7"/>
<dbReference type="OrthoDB" id="9783139at2"/>
<dbReference type="BioCyc" id="SCEL448385:SCE_RS00050-MONOMER"/>
<dbReference type="Proteomes" id="UP000002139">
    <property type="component" value="Chromosome"/>
</dbReference>
<dbReference type="GO" id="GO:0003677">
    <property type="term" value="F:DNA binding"/>
    <property type="evidence" value="ECO:0007669"/>
    <property type="project" value="InterPro"/>
</dbReference>
<dbReference type="GO" id="GO:0045892">
    <property type="term" value="P:negative regulation of DNA-templated transcription"/>
    <property type="evidence" value="ECO:0007669"/>
    <property type="project" value="UniProtKB-UniRule"/>
</dbReference>
<dbReference type="Gene3D" id="3.30.450.40">
    <property type="match status" value="1"/>
</dbReference>
<dbReference type="Gene3D" id="3.30.390.60">
    <property type="entry name" value="Heat-inducible transcription repressor hrca homolog, domain 3"/>
    <property type="match status" value="1"/>
</dbReference>
<dbReference type="Gene3D" id="1.10.10.10">
    <property type="entry name" value="Winged helix-like DNA-binding domain superfamily/Winged helix DNA-binding domain"/>
    <property type="match status" value="1"/>
</dbReference>
<dbReference type="HAMAP" id="MF_00081">
    <property type="entry name" value="HrcA"/>
    <property type="match status" value="1"/>
</dbReference>
<dbReference type="InterPro" id="IPR029016">
    <property type="entry name" value="GAF-like_dom_sf"/>
</dbReference>
<dbReference type="InterPro" id="IPR002571">
    <property type="entry name" value="HrcA"/>
</dbReference>
<dbReference type="InterPro" id="IPR021153">
    <property type="entry name" value="HrcA_C"/>
</dbReference>
<dbReference type="InterPro" id="IPR036388">
    <property type="entry name" value="WH-like_DNA-bd_sf"/>
</dbReference>
<dbReference type="InterPro" id="IPR036390">
    <property type="entry name" value="WH_DNA-bd_sf"/>
</dbReference>
<dbReference type="InterPro" id="IPR023120">
    <property type="entry name" value="WHTH_transcript_rep_HrcA_IDD"/>
</dbReference>
<dbReference type="NCBIfam" id="TIGR00331">
    <property type="entry name" value="hrcA"/>
    <property type="match status" value="1"/>
</dbReference>
<dbReference type="PANTHER" id="PTHR34824">
    <property type="entry name" value="HEAT-INDUCIBLE TRANSCRIPTION REPRESSOR HRCA"/>
    <property type="match status" value="1"/>
</dbReference>
<dbReference type="PANTHER" id="PTHR34824:SF1">
    <property type="entry name" value="HEAT-INDUCIBLE TRANSCRIPTION REPRESSOR HRCA"/>
    <property type="match status" value="1"/>
</dbReference>
<dbReference type="Pfam" id="PF01628">
    <property type="entry name" value="HrcA"/>
    <property type="match status" value="1"/>
</dbReference>
<dbReference type="PIRSF" id="PIRSF005485">
    <property type="entry name" value="HrcA"/>
    <property type="match status" value="1"/>
</dbReference>
<dbReference type="SUPFAM" id="SSF55781">
    <property type="entry name" value="GAF domain-like"/>
    <property type="match status" value="1"/>
</dbReference>
<dbReference type="SUPFAM" id="SSF46785">
    <property type="entry name" value="Winged helix' DNA-binding domain"/>
    <property type="match status" value="1"/>
</dbReference>
<organism>
    <name type="scientific">Sorangium cellulosum (strain So ce56)</name>
    <name type="common">Polyangium cellulosum (strain So ce56)</name>
    <dbReference type="NCBI Taxonomy" id="448385"/>
    <lineage>
        <taxon>Bacteria</taxon>
        <taxon>Pseudomonadati</taxon>
        <taxon>Myxococcota</taxon>
        <taxon>Polyangia</taxon>
        <taxon>Polyangiales</taxon>
        <taxon>Polyangiaceae</taxon>
        <taxon>Sorangium</taxon>
    </lineage>
</organism>
<keyword id="KW-1185">Reference proteome</keyword>
<keyword id="KW-0678">Repressor</keyword>
<keyword id="KW-0346">Stress response</keyword>
<keyword id="KW-0804">Transcription</keyword>
<keyword id="KW-0805">Transcription regulation</keyword>